<keyword id="KW-0479">Metal-binding</keyword>
<keyword id="KW-0520">NAD</keyword>
<keyword id="KW-0521">NADP</keyword>
<keyword id="KW-0558">Oxidation</keyword>
<keyword id="KW-0560">Oxidoreductase</keyword>
<keyword id="KW-0630">Potassium</keyword>
<keyword id="KW-1185">Reference proteome</keyword>
<sequence>MARFELQKLYIDGGYVDASNTETFDSINPANGEVLAKIQRASKEDVERAVVAAEKGQKIWAAMTAVERSRILRRAVDILRERNDELAALETLDTGKAISETRYVDIVTGADVLEYYAGLVPAIEGEQIPLRDSSFVYTRREPLGVVAGIGAWNYPIQIALWKSAPALAAGNAMIFKPSEVTSLTTLKLAEIYTEAGVPNGVFNVLTGSGREVGTWITEHPRIEKVSFTGGTDTGKKVMASASSSSLKEVTMELGGKSPLIVFDDADLDRAADIAMMANFYSSGQVCTNGTRVFVPNALKGEFEAKILERVKRIRPGNPEDENINFGPLVSFEHMESVLGYIAKGKEQGARLLCGGDRLTGGVFDKGAFVAATVFTDCTDEMTIVREEIFGPVMSILGYDTEDEVVRRANDTDFGLAAGIVTRDLNRAHRVIHLLEAGICWINAWGESAAQMPVGGYKQSGVGRENGISSLAQYTRIKSVQIELGDYASVF</sequence>
<accession>Q88AE9</accession>
<organism>
    <name type="scientific">Pseudomonas syringae pv. tomato (strain ATCC BAA-871 / DC3000)</name>
    <dbReference type="NCBI Taxonomy" id="223283"/>
    <lineage>
        <taxon>Bacteria</taxon>
        <taxon>Pseudomonadati</taxon>
        <taxon>Pseudomonadota</taxon>
        <taxon>Gammaproteobacteria</taxon>
        <taxon>Pseudomonadales</taxon>
        <taxon>Pseudomonadaceae</taxon>
        <taxon>Pseudomonas</taxon>
    </lineage>
</organism>
<name>BETB_PSESM</name>
<protein>
    <recommendedName>
        <fullName evidence="1">Betaine aldehyde dehydrogenase</fullName>
        <shortName evidence="1">BADH</shortName>
        <ecNumber evidence="1">1.2.1.8</ecNumber>
    </recommendedName>
</protein>
<dbReference type="EC" id="1.2.1.8" evidence="1"/>
<dbReference type="EMBL" id="AE016853">
    <property type="protein sequence ID" value="AAO53985.1"/>
    <property type="molecule type" value="Genomic_DNA"/>
</dbReference>
<dbReference type="RefSeq" id="NP_790290.1">
    <property type="nucleotide sequence ID" value="NC_004578.1"/>
</dbReference>
<dbReference type="RefSeq" id="WP_005763655.1">
    <property type="nucleotide sequence ID" value="NC_004578.1"/>
</dbReference>
<dbReference type="SMR" id="Q88AE9"/>
<dbReference type="STRING" id="223283.PSPTO_0441"/>
<dbReference type="GeneID" id="1182050"/>
<dbReference type="KEGG" id="pst:PSPTO_0441"/>
<dbReference type="PATRIC" id="fig|223283.9.peg.461"/>
<dbReference type="eggNOG" id="COG1012">
    <property type="taxonomic scope" value="Bacteria"/>
</dbReference>
<dbReference type="HOGENOM" id="CLU_005391_0_0_6"/>
<dbReference type="OrthoDB" id="9812625at2"/>
<dbReference type="PhylomeDB" id="Q88AE9"/>
<dbReference type="UniPathway" id="UPA00529">
    <property type="reaction ID" value="UER00386"/>
</dbReference>
<dbReference type="Proteomes" id="UP000002515">
    <property type="component" value="Chromosome"/>
</dbReference>
<dbReference type="GO" id="GO:0008802">
    <property type="term" value="F:betaine-aldehyde dehydrogenase (NAD+) activity"/>
    <property type="evidence" value="ECO:0007669"/>
    <property type="project" value="UniProtKB-UniRule"/>
</dbReference>
<dbReference type="GO" id="GO:0046872">
    <property type="term" value="F:metal ion binding"/>
    <property type="evidence" value="ECO:0007669"/>
    <property type="project" value="UniProtKB-KW"/>
</dbReference>
<dbReference type="GO" id="GO:0019285">
    <property type="term" value="P:glycine betaine biosynthetic process from choline"/>
    <property type="evidence" value="ECO:0007669"/>
    <property type="project" value="UniProtKB-UniRule"/>
</dbReference>
<dbReference type="CDD" id="cd07090">
    <property type="entry name" value="ALDH_F9_TMBADH"/>
    <property type="match status" value="1"/>
</dbReference>
<dbReference type="FunFam" id="3.40.309.10:FF:000014">
    <property type="entry name" value="NAD/NADP-dependent betaine aldehyde dehydrogenase"/>
    <property type="match status" value="1"/>
</dbReference>
<dbReference type="FunFam" id="3.40.605.10:FF:000007">
    <property type="entry name" value="NAD/NADP-dependent betaine aldehyde dehydrogenase"/>
    <property type="match status" value="1"/>
</dbReference>
<dbReference type="Gene3D" id="3.40.605.10">
    <property type="entry name" value="Aldehyde Dehydrogenase, Chain A, domain 1"/>
    <property type="match status" value="1"/>
</dbReference>
<dbReference type="Gene3D" id="3.40.309.10">
    <property type="entry name" value="Aldehyde Dehydrogenase, Chain A, domain 2"/>
    <property type="match status" value="1"/>
</dbReference>
<dbReference type="HAMAP" id="MF_00804">
    <property type="entry name" value="BADH"/>
    <property type="match status" value="1"/>
</dbReference>
<dbReference type="InterPro" id="IPR016161">
    <property type="entry name" value="Ald_DH/histidinol_DH"/>
</dbReference>
<dbReference type="InterPro" id="IPR016163">
    <property type="entry name" value="Ald_DH_C"/>
</dbReference>
<dbReference type="InterPro" id="IPR016160">
    <property type="entry name" value="Ald_DH_CS_CYS"/>
</dbReference>
<dbReference type="InterPro" id="IPR029510">
    <property type="entry name" value="Ald_DH_CS_GLU"/>
</dbReference>
<dbReference type="InterPro" id="IPR016162">
    <property type="entry name" value="Ald_DH_N"/>
</dbReference>
<dbReference type="InterPro" id="IPR015590">
    <property type="entry name" value="Aldehyde_DH_dom"/>
</dbReference>
<dbReference type="InterPro" id="IPR011264">
    <property type="entry name" value="BADH"/>
</dbReference>
<dbReference type="NCBIfam" id="TIGR01804">
    <property type="entry name" value="BADH"/>
    <property type="match status" value="1"/>
</dbReference>
<dbReference type="NCBIfam" id="NF009725">
    <property type="entry name" value="PRK13252.1"/>
    <property type="match status" value="1"/>
</dbReference>
<dbReference type="PANTHER" id="PTHR11699">
    <property type="entry name" value="ALDEHYDE DEHYDROGENASE-RELATED"/>
    <property type="match status" value="1"/>
</dbReference>
<dbReference type="Pfam" id="PF00171">
    <property type="entry name" value="Aldedh"/>
    <property type="match status" value="1"/>
</dbReference>
<dbReference type="SUPFAM" id="SSF53720">
    <property type="entry name" value="ALDH-like"/>
    <property type="match status" value="1"/>
</dbReference>
<dbReference type="PROSITE" id="PS00070">
    <property type="entry name" value="ALDEHYDE_DEHYDR_CYS"/>
    <property type="match status" value="1"/>
</dbReference>
<dbReference type="PROSITE" id="PS00687">
    <property type="entry name" value="ALDEHYDE_DEHYDR_GLU"/>
    <property type="match status" value="1"/>
</dbReference>
<comment type="function">
    <text evidence="1">Involved in the biosynthesis of the osmoprotectant glycine betaine. Catalyzes the irreversible oxidation of betaine aldehyde to the corresponding acid.</text>
</comment>
<comment type="catalytic activity">
    <reaction evidence="1">
        <text>betaine aldehyde + NAD(+) + H2O = glycine betaine + NADH + 2 H(+)</text>
        <dbReference type="Rhea" id="RHEA:15305"/>
        <dbReference type="ChEBI" id="CHEBI:15377"/>
        <dbReference type="ChEBI" id="CHEBI:15378"/>
        <dbReference type="ChEBI" id="CHEBI:15710"/>
        <dbReference type="ChEBI" id="CHEBI:17750"/>
        <dbReference type="ChEBI" id="CHEBI:57540"/>
        <dbReference type="ChEBI" id="CHEBI:57945"/>
        <dbReference type="EC" id="1.2.1.8"/>
    </reaction>
    <physiologicalReaction direction="left-to-right" evidence="1">
        <dbReference type="Rhea" id="RHEA:15306"/>
    </physiologicalReaction>
</comment>
<comment type="cofactor">
    <cofactor evidence="1">
        <name>K(+)</name>
        <dbReference type="ChEBI" id="CHEBI:29103"/>
    </cofactor>
    <text evidence="1">Binds 2 potassium ions per subunit.</text>
</comment>
<comment type="pathway">
    <text evidence="1">Amine and polyamine biosynthesis; betaine biosynthesis via choline pathway; betaine from betaine aldehyde: step 1/1.</text>
</comment>
<comment type="subunit">
    <text evidence="1">Dimer of dimers.</text>
</comment>
<comment type="similarity">
    <text evidence="1">Belongs to the aldehyde dehydrogenase family.</text>
</comment>
<evidence type="ECO:0000255" key="1">
    <source>
        <dbReference type="HAMAP-Rule" id="MF_00804"/>
    </source>
</evidence>
<proteinExistence type="inferred from homology"/>
<reference key="1">
    <citation type="journal article" date="2003" name="Proc. Natl. Acad. Sci. U.S.A.">
        <title>The complete genome sequence of the Arabidopsis and tomato pathogen Pseudomonas syringae pv. tomato DC3000.</title>
        <authorList>
            <person name="Buell C.R."/>
            <person name="Joardar V."/>
            <person name="Lindeberg M."/>
            <person name="Selengut J."/>
            <person name="Paulsen I.T."/>
            <person name="Gwinn M.L."/>
            <person name="Dodson R.J."/>
            <person name="DeBoy R.T."/>
            <person name="Durkin A.S."/>
            <person name="Kolonay J.F."/>
            <person name="Madupu R."/>
            <person name="Daugherty S.C."/>
            <person name="Brinkac L.M."/>
            <person name="Beanan M.J."/>
            <person name="Haft D.H."/>
            <person name="Nelson W.C."/>
            <person name="Davidsen T.M."/>
            <person name="Zafar N."/>
            <person name="Zhou L."/>
            <person name="Liu J."/>
            <person name="Yuan Q."/>
            <person name="Khouri H.M."/>
            <person name="Fedorova N.B."/>
            <person name="Tran B."/>
            <person name="Russell D."/>
            <person name="Berry K.J."/>
            <person name="Utterback T.R."/>
            <person name="Van Aken S.E."/>
            <person name="Feldblyum T.V."/>
            <person name="D'Ascenzo M."/>
            <person name="Deng W.-L."/>
            <person name="Ramos A.R."/>
            <person name="Alfano J.R."/>
            <person name="Cartinhour S."/>
            <person name="Chatterjee A.K."/>
            <person name="Delaney T.P."/>
            <person name="Lazarowitz S.G."/>
            <person name="Martin G.B."/>
            <person name="Schneider D.J."/>
            <person name="Tang X."/>
            <person name="Bender C.L."/>
            <person name="White O."/>
            <person name="Fraser C.M."/>
            <person name="Collmer A."/>
        </authorList>
    </citation>
    <scope>NUCLEOTIDE SEQUENCE [LARGE SCALE GENOMIC DNA]</scope>
    <source>
        <strain>ATCC BAA-871 / DC3000</strain>
    </source>
</reference>
<gene>
    <name evidence="1" type="primary">betB</name>
    <name type="synonym">badH</name>
    <name type="ordered locus">PSPTO_0441</name>
</gene>
<feature type="chain" id="PRO_0000056548" description="Betaine aldehyde dehydrogenase">
    <location>
        <begin position="1"/>
        <end position="490"/>
    </location>
</feature>
<feature type="active site" description="Charge relay system" evidence="1">
    <location>
        <position position="162"/>
    </location>
</feature>
<feature type="active site" description="Proton acceptor" evidence="1">
    <location>
        <position position="252"/>
    </location>
</feature>
<feature type="active site" description="Nucleophile" evidence="1">
    <location>
        <position position="286"/>
    </location>
</feature>
<feature type="active site" description="Charge relay system" evidence="1">
    <location>
        <position position="464"/>
    </location>
</feature>
<feature type="binding site" evidence="1">
    <location>
        <position position="26"/>
    </location>
    <ligand>
        <name>K(+)</name>
        <dbReference type="ChEBI" id="CHEBI:29103"/>
        <label>1</label>
    </ligand>
</feature>
<feature type="binding site" evidence="1">
    <location>
        <position position="27"/>
    </location>
    <ligand>
        <name>K(+)</name>
        <dbReference type="ChEBI" id="CHEBI:29103"/>
        <label>1</label>
    </ligand>
</feature>
<feature type="binding site" evidence="1">
    <location>
        <position position="93"/>
    </location>
    <ligand>
        <name>K(+)</name>
        <dbReference type="ChEBI" id="CHEBI:29103"/>
        <label>1</label>
    </ligand>
</feature>
<feature type="binding site" evidence="1">
    <location>
        <begin position="150"/>
        <end position="152"/>
    </location>
    <ligand>
        <name>NAD(+)</name>
        <dbReference type="ChEBI" id="CHEBI:57540"/>
    </ligand>
</feature>
<feature type="binding site" evidence="1">
    <location>
        <begin position="176"/>
        <end position="179"/>
    </location>
    <ligand>
        <name>NAD(+)</name>
        <dbReference type="ChEBI" id="CHEBI:57540"/>
    </ligand>
</feature>
<feature type="binding site" evidence="1">
    <location>
        <position position="180"/>
    </location>
    <ligand>
        <name>K(+)</name>
        <dbReference type="ChEBI" id="CHEBI:29103"/>
        <label>1</label>
    </ligand>
</feature>
<feature type="binding site" evidence="1">
    <location>
        <begin position="230"/>
        <end position="233"/>
    </location>
    <ligand>
        <name>NAD(+)</name>
        <dbReference type="ChEBI" id="CHEBI:57540"/>
    </ligand>
</feature>
<feature type="binding site" evidence="1">
    <location>
        <position position="246"/>
    </location>
    <ligand>
        <name>K(+)</name>
        <dbReference type="ChEBI" id="CHEBI:29103"/>
        <label>2</label>
    </ligand>
</feature>
<feature type="binding site" evidence="1">
    <location>
        <position position="254"/>
    </location>
    <ligand>
        <name>NAD(+)</name>
        <dbReference type="ChEBI" id="CHEBI:57540"/>
    </ligand>
</feature>
<feature type="binding site" description="covalent" evidence="1">
    <location>
        <position position="286"/>
    </location>
    <ligand>
        <name>NAD(+)</name>
        <dbReference type="ChEBI" id="CHEBI:57540"/>
    </ligand>
</feature>
<feature type="binding site" evidence="1">
    <location>
        <position position="387"/>
    </location>
    <ligand>
        <name>NAD(+)</name>
        <dbReference type="ChEBI" id="CHEBI:57540"/>
    </ligand>
</feature>
<feature type="binding site" evidence="1">
    <location>
        <position position="457"/>
    </location>
    <ligand>
        <name>K(+)</name>
        <dbReference type="ChEBI" id="CHEBI:29103"/>
        <label>2</label>
    </ligand>
</feature>
<feature type="binding site" evidence="1">
    <location>
        <position position="460"/>
    </location>
    <ligand>
        <name>K(+)</name>
        <dbReference type="ChEBI" id="CHEBI:29103"/>
        <label>2</label>
    </ligand>
</feature>
<feature type="site" description="Seems to be a necessary countercharge to the potassium cations" evidence="1">
    <location>
        <position position="248"/>
    </location>
</feature>
<feature type="modified residue" description="Cysteine sulfenic acid (-SOH)" evidence="1">
    <location>
        <position position="286"/>
    </location>
</feature>